<reference key="1">
    <citation type="journal article" date="1998" name="Mol. Microbiol.">
        <title>YopT, a new Yersinia Yop effector protein, affects the cytoskeleton of host cells.</title>
        <authorList>
            <person name="Iriarte M."/>
            <person name="Cornelis G.R."/>
        </authorList>
    </citation>
    <scope>NUCLEOTIDE SEQUENCE [GENOMIC DNA]</scope>
    <scope>FUNCTION</scope>
    <scope>SUBUNIT</scope>
    <source>
        <strain>W22703 / Serotype O:9 / Biotype 2</strain>
        <plasmid>pYVe227</plasmid>
    </source>
</reference>
<reference key="2">
    <citation type="submission" date="1998-10" db="EMBL/GenBank/DDBJ databases">
        <title>Detailed genetic map of the pYVe227 plasmid of Yersinia enterocolitica serotype O:9.</title>
        <authorList>
            <person name="Iriarte M."/>
            <person name="Lambermont I."/>
            <person name="Kerbourch C."/>
            <person name="Cornelis G.R."/>
        </authorList>
    </citation>
    <scope>NUCLEOTIDE SEQUENCE [GENOMIC DNA]</scope>
    <source>
        <strain>W22703 / Serotype O:9 / Biotype 2</strain>
        <plasmid>pYVe227</plasmid>
    </source>
</reference>
<reference key="3">
    <citation type="journal article" date="2003" name="Res. Microbiol.">
        <title>DNA sequence and analysis of the pYVa127/90 virulence plasmid of Yersinia enterocolitica strain A127/90.</title>
        <authorList>
            <person name="Foultier B."/>
            <person name="Cornelis G.R."/>
        </authorList>
    </citation>
    <scope>NUCLEOTIDE SEQUENCE [GENOMIC DNA]</scope>
    <source>
        <strain>A127/90 / Serotype O:8 / Biotype 1B</strain>
        <plasmid>pYVa127/90</plasmid>
    </source>
</reference>
<feature type="chain" id="PRO_0000072369" description="Chaperone protein SycT">
    <location>
        <begin position="1"/>
        <end position="130"/>
    </location>
</feature>
<feature type="sequence variant" description="In plasmid pYVa127/90.">
    <original>S</original>
    <variation>P</variation>
    <location>
        <position position="81"/>
    </location>
</feature>
<feature type="sequence variant" description="In plasmid pYVa127/90.">
    <original>P</original>
    <variation>S</variation>
    <location>
        <position position="114"/>
    </location>
</feature>
<feature type="helix" evidence="2">
    <location>
        <begin position="5"/>
        <end position="16"/>
    </location>
</feature>
<feature type="strand" evidence="2">
    <location>
        <begin position="28"/>
        <end position="33"/>
    </location>
</feature>
<feature type="strand" evidence="2">
    <location>
        <begin position="36"/>
        <end position="43"/>
    </location>
</feature>
<feature type="turn" evidence="2">
    <location>
        <begin position="44"/>
        <end position="46"/>
    </location>
</feature>
<feature type="strand" evidence="2">
    <location>
        <begin position="47"/>
        <end position="53"/>
    </location>
</feature>
<feature type="strand" evidence="2">
    <location>
        <begin position="65"/>
        <end position="70"/>
    </location>
</feature>
<feature type="strand" evidence="2">
    <location>
        <begin position="73"/>
        <end position="77"/>
    </location>
</feature>
<feature type="strand" evidence="2">
    <location>
        <begin position="80"/>
        <end position="89"/>
    </location>
</feature>
<feature type="helix" evidence="2">
    <location>
        <begin position="94"/>
        <end position="111"/>
    </location>
</feature>
<feature type="helix" evidence="2">
    <location>
        <begin position="114"/>
        <end position="117"/>
    </location>
</feature>
<dbReference type="EMBL" id="AF102990">
    <property type="protein sequence ID" value="AAD16809.1"/>
    <property type="molecule type" value="Genomic_DNA"/>
</dbReference>
<dbReference type="EMBL" id="AY150843">
    <property type="protein sequence ID" value="AAN37556.1"/>
    <property type="molecule type" value="Genomic_DNA"/>
</dbReference>
<dbReference type="RefSeq" id="NP_052386.1">
    <property type="nucleotide sequence ID" value="NC_002120.1"/>
</dbReference>
<dbReference type="RefSeq" id="NP_783658.1">
    <property type="nucleotide sequence ID" value="NC_004564.1"/>
</dbReference>
<dbReference type="RefSeq" id="NP_863508.1">
    <property type="nucleotide sequence ID" value="NC_005017.1"/>
</dbReference>
<dbReference type="RefSeq" id="WP_005176720.1">
    <property type="nucleotide sequence ID" value="NZ_NWMR01000110.1"/>
</dbReference>
<dbReference type="RefSeq" id="WP_010891204.1">
    <property type="nucleotide sequence ID" value="NZ_KN150737.1"/>
</dbReference>
<dbReference type="PDB" id="2BHO">
    <property type="method" value="X-ray"/>
    <property type="resolution" value="2.61 A"/>
    <property type="chains" value="A=1-130"/>
</dbReference>
<dbReference type="PDB" id="2BSH">
    <property type="method" value="X-ray"/>
    <property type="resolution" value="1.90 A"/>
    <property type="chains" value="A/B=2-122"/>
</dbReference>
<dbReference type="PDB" id="2BSI">
    <property type="method" value="X-ray"/>
    <property type="resolution" value="2.01 A"/>
    <property type="chains" value="A/B=2-122"/>
</dbReference>
<dbReference type="PDB" id="2BSJ">
    <property type="method" value="X-ray"/>
    <property type="resolution" value="1.83 A"/>
    <property type="chains" value="A/B=2-130"/>
</dbReference>
<dbReference type="PDBsum" id="2BHO"/>
<dbReference type="PDBsum" id="2BSH"/>
<dbReference type="PDBsum" id="2BSI"/>
<dbReference type="PDBsum" id="2BSJ"/>
<dbReference type="SMR" id="P0C2V9"/>
<dbReference type="GeneID" id="31412250"/>
<dbReference type="KEGG" id="yet:CH48_4233"/>
<dbReference type="OMA" id="THQNEEW"/>
<dbReference type="EvolutionaryTrace" id="P0C2V9"/>
<dbReference type="GO" id="GO:0030254">
    <property type="term" value="P:protein secretion by the type III secretion system"/>
    <property type="evidence" value="ECO:0007669"/>
    <property type="project" value="InterPro"/>
</dbReference>
<dbReference type="CDD" id="cd17032">
    <property type="entry name" value="T3SC_IA_SycT-like"/>
    <property type="match status" value="1"/>
</dbReference>
<dbReference type="Gene3D" id="3.30.1460.10">
    <property type="match status" value="1"/>
</dbReference>
<dbReference type="InterPro" id="IPR010261">
    <property type="entry name" value="Tir_chaperone"/>
</dbReference>
<dbReference type="Pfam" id="PF05932">
    <property type="entry name" value="CesT"/>
    <property type="match status" value="1"/>
</dbReference>
<dbReference type="SUPFAM" id="SSF69635">
    <property type="entry name" value="Type III secretory system chaperone-like"/>
    <property type="match status" value="1"/>
</dbReference>
<evidence type="ECO:0000269" key="1">
    <source>
    </source>
</evidence>
<evidence type="ECO:0007829" key="2">
    <source>
        <dbReference type="PDB" id="2BSJ"/>
    </source>
</evidence>
<comment type="function">
    <text evidence="1">Functions as a specific chaperone for YopT.</text>
</comment>
<comment type="subunit">
    <text evidence="1">Binds to YopT.</text>
</comment>
<name>SYCT_YEREN</name>
<geneLocation type="plasmid">
    <name>pYVe227</name>
</geneLocation>
<geneLocation type="plasmid">
    <name>pYVa127/90</name>
</geneLocation>
<protein>
    <recommendedName>
        <fullName>Chaperone protein SycT</fullName>
    </recommendedName>
</protein>
<gene>
    <name type="primary">sycT</name>
</gene>
<accession>P0C2V9</accession>
<accession>O85243</accession>
<accession>Q93KU9</accession>
<keyword id="KW-0002">3D-structure</keyword>
<keyword id="KW-0143">Chaperone</keyword>
<keyword id="KW-0614">Plasmid</keyword>
<organism>
    <name type="scientific">Yersinia enterocolitica</name>
    <dbReference type="NCBI Taxonomy" id="630"/>
    <lineage>
        <taxon>Bacteria</taxon>
        <taxon>Pseudomonadati</taxon>
        <taxon>Pseudomonadota</taxon>
        <taxon>Gammaproteobacteria</taxon>
        <taxon>Enterobacterales</taxon>
        <taxon>Yersiniaceae</taxon>
        <taxon>Yersinia</taxon>
    </lineage>
</organism>
<sequence length="130" mass="15158">MQTTFTELMQQLFLKLGLNHQVNENDVYTFEVDGHIQVLIACYHQQWVQLFSELGADLPTNDNLFGEHWPAHVQGRLDGKSILWSQQSLVGLDIDEMQAWLERFIDDIEQRKEPQNTKFQPNSTSPILFI</sequence>
<proteinExistence type="evidence at protein level"/>